<comment type="function">
    <text evidence="1">Confers resistance to chloramphenicol.</text>
</comment>
<comment type="subcellular location">
    <subcellularLocation>
        <location evidence="1">Cell inner membrane</location>
        <topology evidence="1">Multi-pass membrane protein</topology>
    </subcellularLocation>
</comment>
<comment type="similarity">
    <text evidence="1">Belongs to the major facilitator superfamily. DHA1 family. MdtL (TC 2.A.1.2.22) subfamily.</text>
</comment>
<dbReference type="EMBL" id="CU928162">
    <property type="protein sequence ID" value="CAR10526.2"/>
    <property type="molecule type" value="Genomic_DNA"/>
</dbReference>
<dbReference type="RefSeq" id="WP_000085973.1">
    <property type="nucleotide sequence ID" value="NC_011745.1"/>
</dbReference>
<dbReference type="SMR" id="B7N2F5"/>
<dbReference type="KEGG" id="ecq:ECED1_4401"/>
<dbReference type="HOGENOM" id="CLU_001265_47_1_6"/>
<dbReference type="Proteomes" id="UP000000748">
    <property type="component" value="Chromosome"/>
</dbReference>
<dbReference type="GO" id="GO:0005886">
    <property type="term" value="C:plasma membrane"/>
    <property type="evidence" value="ECO:0007669"/>
    <property type="project" value="UniProtKB-SubCell"/>
</dbReference>
<dbReference type="GO" id="GO:0022857">
    <property type="term" value="F:transmembrane transporter activity"/>
    <property type="evidence" value="ECO:0007669"/>
    <property type="project" value="UniProtKB-UniRule"/>
</dbReference>
<dbReference type="GO" id="GO:0046677">
    <property type="term" value="P:response to antibiotic"/>
    <property type="evidence" value="ECO:0007669"/>
    <property type="project" value="UniProtKB-KW"/>
</dbReference>
<dbReference type="CDD" id="cd17320">
    <property type="entry name" value="MFS_MdfA_MDR_like"/>
    <property type="match status" value="1"/>
</dbReference>
<dbReference type="FunFam" id="1.20.1720.10:FF:000003">
    <property type="entry name" value="Multidrug resistance protein MdtL"/>
    <property type="match status" value="1"/>
</dbReference>
<dbReference type="Gene3D" id="1.20.1720.10">
    <property type="entry name" value="Multidrug resistance protein D"/>
    <property type="match status" value="1"/>
</dbReference>
<dbReference type="HAMAP" id="MF_01530">
    <property type="entry name" value="MFS_MdtL"/>
    <property type="match status" value="1"/>
</dbReference>
<dbReference type="InterPro" id="IPR011701">
    <property type="entry name" value="MFS"/>
</dbReference>
<dbReference type="InterPro" id="IPR020846">
    <property type="entry name" value="MFS_dom"/>
</dbReference>
<dbReference type="InterPro" id="IPR050189">
    <property type="entry name" value="MFS_Efflux_Transporters"/>
</dbReference>
<dbReference type="InterPro" id="IPR036259">
    <property type="entry name" value="MFS_trans_sf"/>
</dbReference>
<dbReference type="InterPro" id="IPR023697">
    <property type="entry name" value="Multidrug-R_MdtL"/>
</dbReference>
<dbReference type="NCBIfam" id="NF007782">
    <property type="entry name" value="PRK10473.1"/>
    <property type="match status" value="1"/>
</dbReference>
<dbReference type="PANTHER" id="PTHR43124:SF3">
    <property type="entry name" value="CHLORAMPHENICOL EFFLUX PUMP RV0191"/>
    <property type="match status" value="1"/>
</dbReference>
<dbReference type="PANTHER" id="PTHR43124">
    <property type="entry name" value="PURINE EFFLUX PUMP PBUE"/>
    <property type="match status" value="1"/>
</dbReference>
<dbReference type="Pfam" id="PF07690">
    <property type="entry name" value="MFS_1"/>
    <property type="match status" value="1"/>
</dbReference>
<dbReference type="SUPFAM" id="SSF103473">
    <property type="entry name" value="MFS general substrate transporter"/>
    <property type="match status" value="1"/>
</dbReference>
<dbReference type="PROSITE" id="PS50850">
    <property type="entry name" value="MFS"/>
    <property type="match status" value="1"/>
</dbReference>
<feature type="chain" id="PRO_1000185170" description="Multidrug resistance protein MdtL">
    <location>
        <begin position="1"/>
        <end position="391"/>
    </location>
</feature>
<feature type="transmembrane region" description="Helical" evidence="1">
    <location>
        <begin position="4"/>
        <end position="24"/>
    </location>
</feature>
<feature type="transmembrane region" description="Helical" evidence="1">
    <location>
        <begin position="42"/>
        <end position="62"/>
    </location>
</feature>
<feature type="transmembrane region" description="Helical" evidence="1">
    <location>
        <begin position="69"/>
        <end position="89"/>
    </location>
</feature>
<feature type="transmembrane region" description="Helical" evidence="1">
    <location>
        <begin position="93"/>
        <end position="113"/>
    </location>
</feature>
<feature type="transmembrane region" description="Helical" evidence="1">
    <location>
        <begin position="134"/>
        <end position="154"/>
    </location>
</feature>
<feature type="transmembrane region" description="Helical" evidence="1">
    <location>
        <begin position="158"/>
        <end position="178"/>
    </location>
</feature>
<feature type="transmembrane region" description="Helical" evidence="1">
    <location>
        <begin position="203"/>
        <end position="222"/>
    </location>
</feature>
<feature type="transmembrane region" description="Helical" evidence="1">
    <location>
        <begin position="245"/>
        <end position="265"/>
    </location>
</feature>
<feature type="transmembrane region" description="Helical" evidence="1">
    <location>
        <begin position="269"/>
        <end position="289"/>
    </location>
</feature>
<feature type="transmembrane region" description="Helical" evidence="1">
    <location>
        <begin position="293"/>
        <end position="313"/>
    </location>
</feature>
<feature type="transmembrane region" description="Helical" evidence="1">
    <location>
        <begin position="331"/>
        <end position="351"/>
    </location>
</feature>
<feature type="transmembrane region" description="Helical" evidence="1">
    <location>
        <begin position="356"/>
        <end position="376"/>
    </location>
</feature>
<sequence>MSRFLICSFALVLLYPAGIDMYLVGLPRIAADLNASEAQLHIAFSVYLAGMAAAMLFAGKVADRSGRKPVAIPGAALFIIASVFCSLAETSALFLAGRFLQGLGAGCCYVVAFAILRDTLDDRRRAKVLSLLNGITCIIPVLAPVLGHLIMLNFPWQSLFWTMAIMGVAVLMLSLFILKETRPAAPAASDKPRENSESLLNRFFLSRVVITTLSVSVILTFVNTSPVLLMEIMGFERGEYATIMALTAGVSMTVSFSTPFALGIFKPRTLMITSQVLFLAAGITLAVSPSHAVSLFGITLICAGFSVGFGVAMSQALGPFSLRAGVASSTLGIAQVCGSSLWIWLAAVVGIGAWNMLIGILIACSIVSLLLIMFVAPGRPVAAHEEIHHHA</sequence>
<name>MDTL_ECO81</name>
<reference key="1">
    <citation type="journal article" date="2009" name="PLoS Genet.">
        <title>Organised genome dynamics in the Escherichia coli species results in highly diverse adaptive paths.</title>
        <authorList>
            <person name="Touchon M."/>
            <person name="Hoede C."/>
            <person name="Tenaillon O."/>
            <person name="Barbe V."/>
            <person name="Baeriswyl S."/>
            <person name="Bidet P."/>
            <person name="Bingen E."/>
            <person name="Bonacorsi S."/>
            <person name="Bouchier C."/>
            <person name="Bouvet O."/>
            <person name="Calteau A."/>
            <person name="Chiapello H."/>
            <person name="Clermont O."/>
            <person name="Cruveiller S."/>
            <person name="Danchin A."/>
            <person name="Diard M."/>
            <person name="Dossat C."/>
            <person name="Karoui M.E."/>
            <person name="Frapy E."/>
            <person name="Garry L."/>
            <person name="Ghigo J.M."/>
            <person name="Gilles A.M."/>
            <person name="Johnson J."/>
            <person name="Le Bouguenec C."/>
            <person name="Lescat M."/>
            <person name="Mangenot S."/>
            <person name="Martinez-Jehanne V."/>
            <person name="Matic I."/>
            <person name="Nassif X."/>
            <person name="Oztas S."/>
            <person name="Petit M.A."/>
            <person name="Pichon C."/>
            <person name="Rouy Z."/>
            <person name="Ruf C.S."/>
            <person name="Schneider D."/>
            <person name="Tourret J."/>
            <person name="Vacherie B."/>
            <person name="Vallenet D."/>
            <person name="Medigue C."/>
            <person name="Rocha E.P.C."/>
            <person name="Denamur E."/>
        </authorList>
    </citation>
    <scope>NUCLEOTIDE SEQUENCE [LARGE SCALE GENOMIC DNA]</scope>
    <source>
        <strain>ED1a</strain>
    </source>
</reference>
<gene>
    <name evidence="1" type="primary">mdtL</name>
    <name type="ordered locus">ECED1_4401</name>
</gene>
<protein>
    <recommendedName>
        <fullName evidence="1">Multidrug resistance protein MdtL</fullName>
    </recommendedName>
</protein>
<keyword id="KW-0046">Antibiotic resistance</keyword>
<keyword id="KW-0997">Cell inner membrane</keyword>
<keyword id="KW-1003">Cell membrane</keyword>
<keyword id="KW-0472">Membrane</keyword>
<keyword id="KW-0812">Transmembrane</keyword>
<keyword id="KW-1133">Transmembrane helix</keyword>
<keyword id="KW-0813">Transport</keyword>
<accession>B7N2F5</accession>
<evidence type="ECO:0000255" key="1">
    <source>
        <dbReference type="HAMAP-Rule" id="MF_01530"/>
    </source>
</evidence>
<organism>
    <name type="scientific">Escherichia coli O81 (strain ED1a)</name>
    <dbReference type="NCBI Taxonomy" id="585397"/>
    <lineage>
        <taxon>Bacteria</taxon>
        <taxon>Pseudomonadati</taxon>
        <taxon>Pseudomonadota</taxon>
        <taxon>Gammaproteobacteria</taxon>
        <taxon>Enterobacterales</taxon>
        <taxon>Enterobacteriaceae</taxon>
        <taxon>Escherichia</taxon>
    </lineage>
</organism>
<proteinExistence type="inferred from homology"/>